<evidence type="ECO:0000250" key="1">
    <source>
        <dbReference type="UniProtKB" id="Q9WYT0"/>
    </source>
</evidence>
<evidence type="ECO:0000255" key="2">
    <source>
        <dbReference type="PROSITE-ProRule" id="PRU00661"/>
    </source>
</evidence>
<evidence type="ECO:0000305" key="3"/>
<name>THYX_BPMD2</name>
<gene>
    <name type="primary">48</name>
</gene>
<keyword id="KW-0274">FAD</keyword>
<keyword id="KW-0285">Flavoprotein</keyword>
<keyword id="KW-0489">Methyltransferase</keyword>
<keyword id="KW-0521">NADP</keyword>
<keyword id="KW-0545">Nucleotide biosynthesis</keyword>
<keyword id="KW-1185">Reference proteome</keyword>
<keyword id="KW-0808">Transferase</keyword>
<accession>O64238</accession>
<feature type="chain" id="PRO_0000175600" description="Probable flavin-dependent thymidylate synthase">
    <location>
        <begin position="1"/>
        <end position="235"/>
    </location>
</feature>
<feature type="domain" description="ThyX" evidence="2">
    <location>
        <begin position="1"/>
        <end position="229"/>
    </location>
</feature>
<feature type="short sequence motif" description="ThyX motif" evidence="2">
    <location>
        <begin position="93"/>
        <end position="103"/>
    </location>
</feature>
<feature type="active site" description="Involved in ionization of N3 of dUMP, leading to its activation" evidence="1">
    <location>
        <position position="195"/>
    </location>
</feature>
<feature type="binding site" evidence="1">
    <location>
        <position position="70"/>
    </location>
    <ligand>
        <name>FAD</name>
        <dbReference type="ChEBI" id="CHEBI:57692"/>
        <note>ligand shared between neighboring subunits</note>
    </ligand>
</feature>
<feature type="binding site" evidence="1">
    <location>
        <begin position="90"/>
        <end position="93"/>
    </location>
    <ligand>
        <name>dUMP</name>
        <dbReference type="ChEBI" id="CHEBI:246422"/>
        <note>ligand shared between dimeric partners</note>
    </ligand>
</feature>
<feature type="binding site" evidence="1">
    <location>
        <begin position="93"/>
        <end position="95"/>
    </location>
    <ligand>
        <name>FAD</name>
        <dbReference type="ChEBI" id="CHEBI:57692"/>
        <note>ligand shared between neighboring subunits</note>
    </ligand>
</feature>
<feature type="binding site" description="in other chain" evidence="1">
    <location>
        <begin position="103"/>
        <end position="105"/>
    </location>
    <ligand>
        <name>dUMP</name>
        <dbReference type="ChEBI" id="CHEBI:246422"/>
        <note>ligand shared between dimeric partners</note>
    </ligand>
</feature>
<feature type="binding site" description="in other chain" evidence="1">
    <location>
        <position position="168"/>
    </location>
    <ligand>
        <name>dUMP</name>
        <dbReference type="ChEBI" id="CHEBI:246422"/>
        <note>ligand shared between dimeric partners</note>
    </ligand>
</feature>
<feature type="binding site" evidence="1">
    <location>
        <begin position="184"/>
        <end position="186"/>
    </location>
    <ligand>
        <name>FAD</name>
        <dbReference type="ChEBI" id="CHEBI:57692"/>
        <note>ligand shared between neighboring subunits</note>
    </ligand>
</feature>
<feature type="binding site" evidence="1">
    <location>
        <position position="195"/>
    </location>
    <ligand>
        <name>dUMP</name>
        <dbReference type="ChEBI" id="CHEBI:246422"/>
        <note>ligand shared between dimeric partners</note>
    </ligand>
</feature>
<protein>
    <recommendedName>
        <fullName evidence="1">Probable flavin-dependent thymidylate synthase</fullName>
        <shortName evidence="1">FDTS</shortName>
        <ecNumber evidence="1">2.1.1.148</ecNumber>
    </recommendedName>
    <alternativeName>
        <fullName evidence="1">FAD-dependent thymidylate synthase</fullName>
    </alternativeName>
    <alternativeName>
        <fullName>Gp48</fullName>
    </alternativeName>
</protein>
<dbReference type="EC" id="2.1.1.148" evidence="1"/>
<dbReference type="EMBL" id="AF022214">
    <property type="protein sequence ID" value="AAC18488.1"/>
    <property type="molecule type" value="Genomic_DNA"/>
</dbReference>
<dbReference type="PIR" id="E72805">
    <property type="entry name" value="E72805"/>
</dbReference>
<dbReference type="RefSeq" id="NP_046863.1">
    <property type="nucleotide sequence ID" value="NC_001900.1"/>
</dbReference>
<dbReference type="SMR" id="O64238"/>
<dbReference type="GeneID" id="1261588"/>
<dbReference type="KEGG" id="vg:1261588"/>
<dbReference type="OrthoDB" id="6961at10239"/>
<dbReference type="UniPathway" id="UPA00575"/>
<dbReference type="Proteomes" id="UP000002131">
    <property type="component" value="Segment"/>
</dbReference>
<dbReference type="GO" id="GO:0050660">
    <property type="term" value="F:flavin adenine dinucleotide binding"/>
    <property type="evidence" value="ECO:0007669"/>
    <property type="project" value="InterPro"/>
</dbReference>
<dbReference type="GO" id="GO:0070402">
    <property type="term" value="F:NADPH binding"/>
    <property type="evidence" value="ECO:0007669"/>
    <property type="project" value="TreeGrafter"/>
</dbReference>
<dbReference type="GO" id="GO:0050797">
    <property type="term" value="F:thymidylate synthase (FAD) activity"/>
    <property type="evidence" value="ECO:0000314"/>
    <property type="project" value="CACAO"/>
</dbReference>
<dbReference type="GO" id="GO:0004799">
    <property type="term" value="F:thymidylate synthase activity"/>
    <property type="evidence" value="ECO:0007669"/>
    <property type="project" value="TreeGrafter"/>
</dbReference>
<dbReference type="GO" id="GO:0006231">
    <property type="term" value="P:dTMP biosynthetic process"/>
    <property type="evidence" value="ECO:0007669"/>
    <property type="project" value="InterPro"/>
</dbReference>
<dbReference type="GO" id="GO:0006235">
    <property type="term" value="P:dTTP biosynthetic process"/>
    <property type="evidence" value="ECO:0007669"/>
    <property type="project" value="UniProtKB-UniPathway"/>
</dbReference>
<dbReference type="GO" id="GO:0032259">
    <property type="term" value="P:methylation"/>
    <property type="evidence" value="ECO:0007669"/>
    <property type="project" value="UniProtKB-KW"/>
</dbReference>
<dbReference type="CDD" id="cd20175">
    <property type="entry name" value="ThyX"/>
    <property type="match status" value="1"/>
</dbReference>
<dbReference type="Gene3D" id="3.30.70.3180">
    <property type="match status" value="2"/>
</dbReference>
<dbReference type="Gene3D" id="6.10.140.450">
    <property type="match status" value="1"/>
</dbReference>
<dbReference type="HAMAP" id="MF_01408">
    <property type="entry name" value="ThyX"/>
    <property type="match status" value="1"/>
</dbReference>
<dbReference type="InterPro" id="IPR003669">
    <property type="entry name" value="Thymidylate_synthase_ThyX"/>
</dbReference>
<dbReference type="InterPro" id="IPR036098">
    <property type="entry name" value="Thymidylate_synthase_ThyX_sf"/>
</dbReference>
<dbReference type="NCBIfam" id="TIGR02170">
    <property type="entry name" value="thyX"/>
    <property type="match status" value="1"/>
</dbReference>
<dbReference type="PANTHER" id="PTHR34934">
    <property type="entry name" value="FLAVIN-DEPENDENT THYMIDYLATE SYNTHASE"/>
    <property type="match status" value="1"/>
</dbReference>
<dbReference type="PANTHER" id="PTHR34934:SF1">
    <property type="entry name" value="FLAVIN-DEPENDENT THYMIDYLATE SYNTHASE"/>
    <property type="match status" value="1"/>
</dbReference>
<dbReference type="Pfam" id="PF02511">
    <property type="entry name" value="Thy1"/>
    <property type="match status" value="1"/>
</dbReference>
<dbReference type="SUPFAM" id="SSF69796">
    <property type="entry name" value="Thymidylate synthase-complementing protein Thy1"/>
    <property type="match status" value="1"/>
</dbReference>
<dbReference type="PROSITE" id="PS51331">
    <property type="entry name" value="THYX"/>
    <property type="match status" value="1"/>
</dbReference>
<organismHost>
    <name type="scientific">Mycobacterium</name>
    <dbReference type="NCBI Taxonomy" id="1763"/>
</organismHost>
<organism>
    <name type="scientific">Mycobacterium phage D29</name>
    <name type="common">Mycobacteriophage D29</name>
    <dbReference type="NCBI Taxonomy" id="28369"/>
    <lineage>
        <taxon>Viruses</taxon>
        <taxon>Duplodnaviria</taxon>
        <taxon>Heunggongvirae</taxon>
        <taxon>Uroviricota</taxon>
        <taxon>Caudoviricetes</taxon>
        <taxon>Fromanvirus</taxon>
    </lineage>
</organism>
<proteinExistence type="inferred from homology"/>
<reference key="1">
    <citation type="journal article" date="1998" name="J. Mol. Biol.">
        <title>Genome structure of mycobacteriophage D29: implications for phage evolution.</title>
        <authorList>
            <person name="Ford M.E."/>
            <person name="Sarkis G.J."/>
            <person name="Belanger A.E."/>
            <person name="Hendrix R.W."/>
            <person name="Hatfull G.F."/>
        </authorList>
    </citation>
    <scope>NUCLEOTIDE SEQUENCE [LARGE SCALE GENOMIC DNA]</scope>
</reference>
<comment type="function">
    <text evidence="1">Catalyzes the reductive methylation of 2'-deoxyuridine-5'-monophosphate (dUMP) to 2'-deoxythymidine-5'-monophosphate (dTMP) while utilizing 5,10-methylenetetrahydrofolate (mTHF) as the methyl donor, and NADPH and FADH(2) as the reductant.</text>
</comment>
<comment type="catalytic activity">
    <reaction evidence="1">
        <text>dUMP + (6R)-5,10-methylene-5,6,7,8-tetrahydrofolate + NADPH + H(+) = dTMP + (6S)-5,6,7,8-tetrahydrofolate + NADP(+)</text>
        <dbReference type="Rhea" id="RHEA:29043"/>
        <dbReference type="ChEBI" id="CHEBI:15378"/>
        <dbReference type="ChEBI" id="CHEBI:15636"/>
        <dbReference type="ChEBI" id="CHEBI:57453"/>
        <dbReference type="ChEBI" id="CHEBI:57783"/>
        <dbReference type="ChEBI" id="CHEBI:58349"/>
        <dbReference type="ChEBI" id="CHEBI:63528"/>
        <dbReference type="ChEBI" id="CHEBI:246422"/>
        <dbReference type="EC" id="2.1.1.148"/>
    </reaction>
</comment>
<comment type="cofactor">
    <cofactor evidence="1">
        <name>FAD</name>
        <dbReference type="ChEBI" id="CHEBI:57692"/>
    </cofactor>
    <text evidence="1">Binds 4 FAD per tetramer. Each FAD binding site is formed by three monomers.</text>
</comment>
<comment type="pathway">
    <text evidence="1">Pyrimidine metabolism; dTTP biosynthesis.</text>
</comment>
<comment type="subunit">
    <text evidence="1">Homotetramer.</text>
</comment>
<comment type="similarity">
    <text evidence="3">Belongs to the thymidylate synthase ThyX family.</text>
</comment>
<sequence length="235" mass="26528">MKVQLIASTILEDPSWAGTDYVGDDETVTSADELAEFAGRNCYLSFDRPNPKTRENVDYLNHILDVGHESVLEHSSATFYIEASRSVLTELERHRHLSFSVVSQRYVDPTELGIHVPPAFTELSGSDADKAKEVLLDVQSFAQEAYEYLVHIFSDAGFPRKKAREAARAVLPNMTNSPMVVTGNHRAWRYVIKNRWHEAADAEIRELAGELLRQLREIAPNTYQDIPTEPYSYGG</sequence>